<keyword id="KW-0997">Cell inner membrane</keyword>
<keyword id="KW-1003">Cell membrane</keyword>
<keyword id="KW-0342">GTP-binding</keyword>
<keyword id="KW-0378">Hydrolase</keyword>
<keyword id="KW-0472">Membrane</keyword>
<keyword id="KW-0547">Nucleotide-binding</keyword>
<keyword id="KW-0648">Protein biosynthesis</keyword>
<comment type="function">
    <text evidence="1">Required for accurate and efficient protein synthesis under certain stress conditions. May act as a fidelity factor of the translation reaction, by catalyzing a one-codon backward translocation of tRNAs on improperly translocated ribosomes. Back-translocation proceeds from a post-translocation (POST) complex to a pre-translocation (PRE) complex, thus giving elongation factor G a second chance to translocate the tRNAs correctly. Binds to ribosomes in a GTP-dependent manner.</text>
</comment>
<comment type="catalytic activity">
    <reaction evidence="1">
        <text>GTP + H2O = GDP + phosphate + H(+)</text>
        <dbReference type="Rhea" id="RHEA:19669"/>
        <dbReference type="ChEBI" id="CHEBI:15377"/>
        <dbReference type="ChEBI" id="CHEBI:15378"/>
        <dbReference type="ChEBI" id="CHEBI:37565"/>
        <dbReference type="ChEBI" id="CHEBI:43474"/>
        <dbReference type="ChEBI" id="CHEBI:58189"/>
        <dbReference type="EC" id="3.6.5.n1"/>
    </reaction>
</comment>
<comment type="subcellular location">
    <subcellularLocation>
        <location evidence="1">Cell inner membrane</location>
        <topology evidence="1">Peripheral membrane protein</topology>
        <orientation evidence="1">Cytoplasmic side</orientation>
    </subcellularLocation>
</comment>
<comment type="similarity">
    <text evidence="1">Belongs to the TRAFAC class translation factor GTPase superfamily. Classic translation factor GTPase family. LepA subfamily.</text>
</comment>
<sequence>MQQQSNIRNFAIIAHIDHGKSTLADRLIEYCNALEAREMCQQVLDSMDIEKERGITIKAQTVRLVYKADDGCVYHLNLMDTPGHVDFAYEVSRSLAACESSLLVVDASQGVEAQTLANLYQAVDNNHKILIVLNKIDLPAANPQQVQQQIEDVIGIDASDALMISAKIGLGIKDVLQAIVTKLPSPNGDSQSQLKALLIDSWYDSYLGVVILVRVVDGKIEKGMRIRMCSNNAVYTVENVGFFSPKKQISGVLYTGEIGFVTAAIKQVADCRVGDTITDDKKPCAQILPGFKPNLPVVFCGLYPSDASQFNHLKDSLQKLRLNDASFEFEQESSGALGFGFRCGFLGLLHLEIIQERLEREFDLDMITTAPSVMYKVYLNTGKVIDVHNPADLPEMQKIKSMSEPWVEATIFIPDQYLGAILGLCTEKRGVQVDLTYVNGRAKLVYLLPLNEIVFDFYDKLKSYSKGYASFDWQMNSYKQSDLIKLSILVNGNPVDALSTIVHRSKAEFRGRELCKRLKDLIPAHLFQIAIQAAIGSRIIARETIRALRKDVLAKCYGGDITRKRKLLEKQKAGKKRMRNIGNVEIPQSAFIAALKITNKD</sequence>
<proteinExistence type="inferred from homology"/>
<dbReference type="EC" id="3.6.5.n1" evidence="1"/>
<dbReference type="EMBL" id="AP008981">
    <property type="protein sequence ID" value="BAG40192.1"/>
    <property type="molecule type" value="Genomic_DNA"/>
</dbReference>
<dbReference type="RefSeq" id="WP_012461349.1">
    <property type="nucleotide sequence ID" value="NC_010793.1"/>
</dbReference>
<dbReference type="SMR" id="B3CRQ1"/>
<dbReference type="KEGG" id="ott:OTT_0734"/>
<dbReference type="HOGENOM" id="CLU_009995_3_3_5"/>
<dbReference type="OrthoDB" id="9802948at2"/>
<dbReference type="Proteomes" id="UP000001033">
    <property type="component" value="Chromosome"/>
</dbReference>
<dbReference type="GO" id="GO:0005886">
    <property type="term" value="C:plasma membrane"/>
    <property type="evidence" value="ECO:0007669"/>
    <property type="project" value="UniProtKB-SubCell"/>
</dbReference>
<dbReference type="GO" id="GO:0005525">
    <property type="term" value="F:GTP binding"/>
    <property type="evidence" value="ECO:0007669"/>
    <property type="project" value="UniProtKB-UniRule"/>
</dbReference>
<dbReference type="GO" id="GO:0003924">
    <property type="term" value="F:GTPase activity"/>
    <property type="evidence" value="ECO:0007669"/>
    <property type="project" value="UniProtKB-UniRule"/>
</dbReference>
<dbReference type="GO" id="GO:0097216">
    <property type="term" value="F:guanosine tetraphosphate binding"/>
    <property type="evidence" value="ECO:0007669"/>
    <property type="project" value="UniProtKB-ARBA"/>
</dbReference>
<dbReference type="GO" id="GO:0043022">
    <property type="term" value="F:ribosome binding"/>
    <property type="evidence" value="ECO:0007669"/>
    <property type="project" value="UniProtKB-UniRule"/>
</dbReference>
<dbReference type="GO" id="GO:0003746">
    <property type="term" value="F:translation elongation factor activity"/>
    <property type="evidence" value="ECO:0007669"/>
    <property type="project" value="UniProtKB-UniRule"/>
</dbReference>
<dbReference type="GO" id="GO:0045727">
    <property type="term" value="P:positive regulation of translation"/>
    <property type="evidence" value="ECO:0007669"/>
    <property type="project" value="UniProtKB-UniRule"/>
</dbReference>
<dbReference type="CDD" id="cd03699">
    <property type="entry name" value="EF4_II"/>
    <property type="match status" value="1"/>
</dbReference>
<dbReference type="CDD" id="cd16260">
    <property type="entry name" value="EF4_III"/>
    <property type="match status" value="1"/>
</dbReference>
<dbReference type="CDD" id="cd01890">
    <property type="entry name" value="LepA"/>
    <property type="match status" value="1"/>
</dbReference>
<dbReference type="CDD" id="cd03709">
    <property type="entry name" value="lepA_C"/>
    <property type="match status" value="1"/>
</dbReference>
<dbReference type="FunFam" id="3.40.50.300:FF:000078">
    <property type="entry name" value="Elongation factor 4"/>
    <property type="match status" value="1"/>
</dbReference>
<dbReference type="FunFam" id="2.40.30.10:FF:000015">
    <property type="entry name" value="Translation factor GUF1, mitochondrial"/>
    <property type="match status" value="1"/>
</dbReference>
<dbReference type="FunFam" id="3.30.70.240:FF:000007">
    <property type="entry name" value="Translation factor GUF1, mitochondrial"/>
    <property type="match status" value="1"/>
</dbReference>
<dbReference type="FunFam" id="3.30.70.2570:FF:000001">
    <property type="entry name" value="Translation factor GUF1, mitochondrial"/>
    <property type="match status" value="1"/>
</dbReference>
<dbReference type="FunFam" id="3.30.70.870:FF:000004">
    <property type="entry name" value="Translation factor GUF1, mitochondrial"/>
    <property type="match status" value="1"/>
</dbReference>
<dbReference type="Gene3D" id="3.30.70.240">
    <property type="match status" value="1"/>
</dbReference>
<dbReference type="Gene3D" id="3.30.70.2570">
    <property type="entry name" value="Elongation factor 4, C-terminal domain"/>
    <property type="match status" value="1"/>
</dbReference>
<dbReference type="Gene3D" id="3.30.70.870">
    <property type="entry name" value="Elongation Factor G (Translational Gtpase), domain 3"/>
    <property type="match status" value="1"/>
</dbReference>
<dbReference type="Gene3D" id="3.40.50.300">
    <property type="entry name" value="P-loop containing nucleotide triphosphate hydrolases"/>
    <property type="match status" value="1"/>
</dbReference>
<dbReference type="Gene3D" id="2.40.30.10">
    <property type="entry name" value="Translation factors"/>
    <property type="match status" value="1"/>
</dbReference>
<dbReference type="HAMAP" id="MF_00071">
    <property type="entry name" value="LepA"/>
    <property type="match status" value="1"/>
</dbReference>
<dbReference type="InterPro" id="IPR006297">
    <property type="entry name" value="EF-4"/>
</dbReference>
<dbReference type="InterPro" id="IPR035647">
    <property type="entry name" value="EFG_III/V"/>
</dbReference>
<dbReference type="InterPro" id="IPR000640">
    <property type="entry name" value="EFG_V-like"/>
</dbReference>
<dbReference type="InterPro" id="IPR004161">
    <property type="entry name" value="EFTu-like_2"/>
</dbReference>
<dbReference type="InterPro" id="IPR031157">
    <property type="entry name" value="G_TR_CS"/>
</dbReference>
<dbReference type="InterPro" id="IPR038363">
    <property type="entry name" value="LepA_C_sf"/>
</dbReference>
<dbReference type="InterPro" id="IPR013842">
    <property type="entry name" value="LepA_CTD"/>
</dbReference>
<dbReference type="InterPro" id="IPR035654">
    <property type="entry name" value="LepA_IV"/>
</dbReference>
<dbReference type="InterPro" id="IPR027417">
    <property type="entry name" value="P-loop_NTPase"/>
</dbReference>
<dbReference type="InterPro" id="IPR005225">
    <property type="entry name" value="Small_GTP-bd"/>
</dbReference>
<dbReference type="InterPro" id="IPR000795">
    <property type="entry name" value="T_Tr_GTP-bd_dom"/>
</dbReference>
<dbReference type="InterPro" id="IPR009000">
    <property type="entry name" value="Transl_B-barrel_sf"/>
</dbReference>
<dbReference type="NCBIfam" id="TIGR01393">
    <property type="entry name" value="lepA"/>
    <property type="match status" value="1"/>
</dbReference>
<dbReference type="NCBIfam" id="TIGR00231">
    <property type="entry name" value="small_GTP"/>
    <property type="match status" value="1"/>
</dbReference>
<dbReference type="PANTHER" id="PTHR43512:SF4">
    <property type="entry name" value="TRANSLATION FACTOR GUF1 HOMOLOG, CHLOROPLASTIC"/>
    <property type="match status" value="1"/>
</dbReference>
<dbReference type="PANTHER" id="PTHR43512">
    <property type="entry name" value="TRANSLATION FACTOR GUF1-RELATED"/>
    <property type="match status" value="1"/>
</dbReference>
<dbReference type="Pfam" id="PF00679">
    <property type="entry name" value="EFG_C"/>
    <property type="match status" value="1"/>
</dbReference>
<dbReference type="Pfam" id="PF00009">
    <property type="entry name" value="GTP_EFTU"/>
    <property type="match status" value="1"/>
</dbReference>
<dbReference type="Pfam" id="PF03144">
    <property type="entry name" value="GTP_EFTU_D2"/>
    <property type="match status" value="1"/>
</dbReference>
<dbReference type="Pfam" id="PF06421">
    <property type="entry name" value="LepA_C"/>
    <property type="match status" value="1"/>
</dbReference>
<dbReference type="PRINTS" id="PR00315">
    <property type="entry name" value="ELONGATNFCT"/>
</dbReference>
<dbReference type="SUPFAM" id="SSF54980">
    <property type="entry name" value="EF-G C-terminal domain-like"/>
    <property type="match status" value="2"/>
</dbReference>
<dbReference type="SUPFAM" id="SSF52540">
    <property type="entry name" value="P-loop containing nucleoside triphosphate hydrolases"/>
    <property type="match status" value="1"/>
</dbReference>
<dbReference type="SUPFAM" id="SSF50447">
    <property type="entry name" value="Translation proteins"/>
    <property type="match status" value="1"/>
</dbReference>
<dbReference type="PROSITE" id="PS00301">
    <property type="entry name" value="G_TR_1"/>
    <property type="match status" value="1"/>
</dbReference>
<dbReference type="PROSITE" id="PS51722">
    <property type="entry name" value="G_TR_2"/>
    <property type="match status" value="1"/>
</dbReference>
<feature type="chain" id="PRO_1000092422" description="Elongation factor 4">
    <location>
        <begin position="1"/>
        <end position="601"/>
    </location>
</feature>
<feature type="domain" description="tr-type G">
    <location>
        <begin position="5"/>
        <end position="187"/>
    </location>
</feature>
<feature type="binding site" evidence="1">
    <location>
        <begin position="17"/>
        <end position="22"/>
    </location>
    <ligand>
        <name>GTP</name>
        <dbReference type="ChEBI" id="CHEBI:37565"/>
    </ligand>
</feature>
<feature type="binding site" evidence="1">
    <location>
        <begin position="134"/>
        <end position="137"/>
    </location>
    <ligand>
        <name>GTP</name>
        <dbReference type="ChEBI" id="CHEBI:37565"/>
    </ligand>
</feature>
<accession>B3CRQ1</accession>
<protein>
    <recommendedName>
        <fullName evidence="1">Elongation factor 4</fullName>
        <shortName evidence="1">EF-4</shortName>
        <ecNumber evidence="1">3.6.5.n1</ecNumber>
    </recommendedName>
    <alternativeName>
        <fullName evidence="1">Ribosomal back-translocase LepA</fullName>
    </alternativeName>
</protein>
<gene>
    <name evidence="1" type="primary">lepA</name>
    <name type="ordered locus">OTT_0734</name>
</gene>
<evidence type="ECO:0000255" key="1">
    <source>
        <dbReference type="HAMAP-Rule" id="MF_00071"/>
    </source>
</evidence>
<reference key="1">
    <citation type="journal article" date="2008" name="DNA Res.">
        <title>The whole-genome sequencing of the obligate intracellular bacterium Orientia tsutsugamushi revealed massive gene amplification during reductive genome evolution.</title>
        <authorList>
            <person name="Nakayama K."/>
            <person name="Yamashita A."/>
            <person name="Kurokawa K."/>
            <person name="Morimoto T."/>
            <person name="Ogawa M."/>
            <person name="Fukuhara M."/>
            <person name="Urakami H."/>
            <person name="Ohnishi M."/>
            <person name="Uchiyama I."/>
            <person name="Ogura Y."/>
            <person name="Ooka T."/>
            <person name="Oshima K."/>
            <person name="Tamura A."/>
            <person name="Hattori M."/>
            <person name="Hayashi T."/>
        </authorList>
    </citation>
    <scope>NUCLEOTIDE SEQUENCE [LARGE SCALE GENOMIC DNA]</scope>
    <source>
        <strain>Ikeda</strain>
    </source>
</reference>
<name>LEPA_ORITI</name>
<organism>
    <name type="scientific">Orientia tsutsugamushi (strain Ikeda)</name>
    <name type="common">Rickettsia tsutsugamushi</name>
    <dbReference type="NCBI Taxonomy" id="334380"/>
    <lineage>
        <taxon>Bacteria</taxon>
        <taxon>Pseudomonadati</taxon>
        <taxon>Pseudomonadota</taxon>
        <taxon>Alphaproteobacteria</taxon>
        <taxon>Rickettsiales</taxon>
        <taxon>Rickettsiaceae</taxon>
        <taxon>Rickettsieae</taxon>
        <taxon>Orientia</taxon>
    </lineage>
</organism>